<feature type="signal peptide" evidence="2">
    <location>
        <begin position="1"/>
        <end position="20"/>
    </location>
</feature>
<feature type="propeptide" id="PRO_0000340314" evidence="1">
    <location>
        <begin position="21"/>
        <end position="193"/>
    </location>
</feature>
<feature type="chain" id="PRO_0000340315" description="Zinc metalloproteinase-disintegrin-like VLAIP-B">
    <location>
        <begin position="194"/>
        <end position="614"/>
    </location>
</feature>
<feature type="domain" description="Peptidase M12B" evidence="4">
    <location>
        <begin position="202"/>
        <end position="398"/>
    </location>
</feature>
<feature type="domain" description="Disintegrin" evidence="3">
    <location>
        <begin position="406"/>
        <end position="492"/>
    </location>
</feature>
<feature type="short sequence motif" description="D/ECD-tripeptide">
    <location>
        <begin position="470"/>
        <end position="472"/>
    </location>
</feature>
<feature type="active site" evidence="4 5">
    <location>
        <position position="339"/>
    </location>
</feature>
<feature type="binding site" evidence="1">
    <location>
        <position position="205"/>
    </location>
    <ligand>
        <name>Ca(2+)</name>
        <dbReference type="ChEBI" id="CHEBI:29108"/>
        <label>1</label>
    </ligand>
</feature>
<feature type="binding site" evidence="1">
    <location>
        <position position="289"/>
    </location>
    <ligand>
        <name>Ca(2+)</name>
        <dbReference type="ChEBI" id="CHEBI:29108"/>
        <label>1</label>
    </ligand>
</feature>
<feature type="binding site" evidence="1">
    <location>
        <position position="338"/>
    </location>
    <ligand>
        <name>Zn(2+)</name>
        <dbReference type="ChEBI" id="CHEBI:29105"/>
        <note>catalytic</note>
    </ligand>
</feature>
<feature type="binding site" evidence="1">
    <location>
        <position position="342"/>
    </location>
    <ligand>
        <name>Zn(2+)</name>
        <dbReference type="ChEBI" id="CHEBI:29105"/>
        <note>catalytic</note>
    </ligand>
</feature>
<feature type="binding site" evidence="1">
    <location>
        <position position="348"/>
    </location>
    <ligand>
        <name>Zn(2+)</name>
        <dbReference type="ChEBI" id="CHEBI:29105"/>
        <note>catalytic</note>
    </ligand>
</feature>
<feature type="binding site" evidence="1">
    <location>
        <position position="393"/>
    </location>
    <ligand>
        <name>Ca(2+)</name>
        <dbReference type="ChEBI" id="CHEBI:29108"/>
        <label>1</label>
    </ligand>
</feature>
<feature type="binding site" evidence="1">
    <location>
        <position position="396"/>
    </location>
    <ligand>
        <name>Ca(2+)</name>
        <dbReference type="ChEBI" id="CHEBI:29108"/>
        <label>1</label>
    </ligand>
</feature>
<feature type="binding site" evidence="1">
    <location>
        <position position="408"/>
    </location>
    <ligand>
        <name>Ca(2+)</name>
        <dbReference type="ChEBI" id="CHEBI:29108"/>
        <label>2</label>
    </ligand>
</feature>
<feature type="binding site" evidence="1">
    <location>
        <position position="411"/>
    </location>
    <ligand>
        <name>Ca(2+)</name>
        <dbReference type="ChEBI" id="CHEBI:29108"/>
        <label>2</label>
    </ligand>
</feature>
<feature type="binding site" evidence="1">
    <location>
        <position position="413"/>
    </location>
    <ligand>
        <name>Ca(2+)</name>
        <dbReference type="ChEBI" id="CHEBI:29108"/>
        <label>2</label>
    </ligand>
</feature>
<feature type="binding site" evidence="1">
    <location>
        <position position="415"/>
    </location>
    <ligand>
        <name>Ca(2+)</name>
        <dbReference type="ChEBI" id="CHEBI:29108"/>
        <label>2</label>
    </ligand>
</feature>
<feature type="binding site" evidence="1">
    <location>
        <position position="418"/>
    </location>
    <ligand>
        <name>Ca(2+)</name>
        <dbReference type="ChEBI" id="CHEBI:29108"/>
        <label>2</label>
    </ligand>
</feature>
<feature type="binding site" evidence="1">
    <location>
        <position position="421"/>
    </location>
    <ligand>
        <name>Ca(2+)</name>
        <dbReference type="ChEBI" id="CHEBI:29108"/>
        <label>2</label>
    </ligand>
</feature>
<feature type="modified residue" description="Pyrrolidone carboxylic acid" evidence="8">
    <location>
        <position position="194"/>
    </location>
</feature>
<feature type="glycosylation site" description="N-linked (GlcNAc...) asparagine" evidence="2">
    <location>
        <position position="262"/>
    </location>
</feature>
<feature type="glycosylation site" description="N-linked (GlcNAc...) asparagine" evidence="2">
    <location>
        <position position="505"/>
    </location>
</feature>
<feature type="glycosylation site" description="N-linked (GlcNAc...) asparagine" evidence="2">
    <location>
        <position position="547"/>
    </location>
</feature>
<feature type="glycosylation site" description="N-linked (GlcNAc...) asparagine" evidence="2">
    <location>
        <position position="568"/>
    </location>
</feature>
<feature type="disulfide bond" evidence="1">
    <location>
        <begin position="313"/>
        <end position="393"/>
    </location>
</feature>
<feature type="disulfide bond" evidence="1">
    <location>
        <begin position="353"/>
        <end position="377"/>
    </location>
</feature>
<feature type="disulfide bond" evidence="1">
    <location>
        <begin position="355"/>
        <end position="360"/>
    </location>
</feature>
<feature type="disulfide bond" description="Interchain (with C-369 in VLAIP-A)" evidence="3 4">
    <location>
        <position position="368"/>
    </location>
</feature>
<feature type="disulfide bond" evidence="1">
    <location>
        <begin position="409"/>
        <end position="438"/>
    </location>
</feature>
<feature type="disulfide bond" evidence="1">
    <location>
        <begin position="420"/>
        <end position="433"/>
    </location>
</feature>
<feature type="disulfide bond" evidence="1">
    <location>
        <begin position="422"/>
        <end position="428"/>
    </location>
</feature>
<feature type="disulfide bond" evidence="1">
    <location>
        <begin position="432"/>
        <end position="455"/>
    </location>
</feature>
<feature type="disulfide bond" evidence="1">
    <location>
        <begin position="446"/>
        <end position="452"/>
    </location>
</feature>
<feature type="disulfide bond" evidence="1">
    <location>
        <begin position="451"/>
        <end position="477"/>
    </location>
</feature>
<feature type="disulfide bond" evidence="1">
    <location>
        <begin position="464"/>
        <end position="484"/>
    </location>
</feature>
<feature type="disulfide bond" evidence="1">
    <location>
        <begin position="471"/>
        <end position="503"/>
    </location>
</feature>
<feature type="disulfide bond" evidence="1">
    <location>
        <begin position="496"/>
        <end position="508"/>
    </location>
</feature>
<feature type="disulfide bond" evidence="1">
    <location>
        <begin position="515"/>
        <end position="565"/>
    </location>
</feature>
<feature type="disulfide bond" evidence="1">
    <location>
        <begin position="530"/>
        <end position="576"/>
    </location>
</feature>
<feature type="disulfide bond" evidence="1">
    <location>
        <begin position="543"/>
        <end position="553"/>
    </location>
</feature>
<feature type="disulfide bond" evidence="1">
    <location>
        <begin position="560"/>
        <end position="602"/>
    </location>
</feature>
<feature type="disulfide bond" evidence="1">
    <location>
        <begin position="596"/>
        <end position="607"/>
    </location>
</feature>
<evidence type="ECO:0000250" key="1"/>
<evidence type="ECO:0000255" key="2"/>
<evidence type="ECO:0000255" key="3">
    <source>
        <dbReference type="PROSITE-ProRule" id="PRU00068"/>
    </source>
</evidence>
<evidence type="ECO:0000255" key="4">
    <source>
        <dbReference type="PROSITE-ProRule" id="PRU00276"/>
    </source>
</evidence>
<evidence type="ECO:0000255" key="5">
    <source>
        <dbReference type="PROSITE-ProRule" id="PRU10095"/>
    </source>
</evidence>
<evidence type="ECO:0000269" key="6">
    <source>
    </source>
</evidence>
<evidence type="ECO:0000305" key="7"/>
<evidence type="ECO:0000305" key="8">
    <source>
    </source>
</evidence>
<accession>Q4VM07</accession>
<name>VM3VB_MACLB</name>
<organism>
    <name type="scientific">Macrovipera lebetinus</name>
    <name type="common">Levantine viper</name>
    <name type="synonym">Vipera lebetina</name>
    <dbReference type="NCBI Taxonomy" id="3148341"/>
    <lineage>
        <taxon>Eukaryota</taxon>
        <taxon>Metazoa</taxon>
        <taxon>Chordata</taxon>
        <taxon>Craniata</taxon>
        <taxon>Vertebrata</taxon>
        <taxon>Euteleostomi</taxon>
        <taxon>Lepidosauria</taxon>
        <taxon>Squamata</taxon>
        <taxon>Bifurcata</taxon>
        <taxon>Unidentata</taxon>
        <taxon>Episquamata</taxon>
        <taxon>Toxicofera</taxon>
        <taxon>Serpentes</taxon>
        <taxon>Colubroidea</taxon>
        <taxon>Viperidae</taxon>
        <taxon>Viperinae</taxon>
        <taxon>Macrovipera</taxon>
    </lineage>
</organism>
<sequence>MMQVLLVTICLAVFPYQGSSIILESGNVNDYEVVYPQKITALPKGAIQQPEQKYEDAIKYEFKVNGKPVVLHLEKNKGLFSEDYSETHYTPDGREITINPPVEDHCYYHGRIQNDADSTASISACNGLKGHFKLQGEMYLIEPLRIPDSEAHAIYKYENIEKEDEAPKMCGVTQTNWESDEPIKASQLNLTPEQRTYLKSKKYVELVIVADYIMFWKYDRSLSTIRTRIYEIVNTLNVIYRFLNIYIALVAVEIWSKGDLINVTSSAYDTLDSFGEWRERDLLNRKRHDNAQLLTGINFNGPSAGRGFVGRMCQPKYSVGIVQDHSKIYLLVASAMAHEMGHNLGMDHDRIDCTCGAKSCIMSGILRCETSYLFSDCSREEHRKYLINKMPQCILNKPLKTDIVSPAVCGNYFVEVGEECDCGSPANCQDRCCDAATCKLRPGAQCGDGVCCYQCKFRRAGTVCRPANGECDVSDLCTGQSAECPTDQFQRNGQPCQNNKGYCYNGTCPIMEKQCISLFGASATVAQDSCFQFNRRGNHYGYCRKENNTKIACAPEDVKCGRLYCLDNSSGHKNPCQIYYIPSDENKGMVDPGTKCGDGMVCSNGKCVDVTIAY</sequence>
<proteinExistence type="evidence at protein level"/>
<comment type="function">
    <text evidence="6">This metalloproteinase hydrolyzes azocasein, and insulin B-chain (at the '38-Ala-|-Leu-39' bond). Also hydrolyzes the Aalpha-chain (FGA) and more slowly the Bbeta-chain of fibrinogen (FGB), without affecting the gamma-chain. Cleaves alpha-chain of fibrinogen at '432-Lys-|-Leu-433' and '535-Pro-|-Met-536' bonds. Does not cleave fibrin. Inhibits endothelial cell adhesion to extracellular matrix proteins such as fibrinogen, fibronectin, vitronectin, collagen I, and collagen IV. Induces apoptosis in vascular endothelial cells.</text>
</comment>
<comment type="cofactor">
    <cofactor evidence="1">
        <name>Zn(2+)</name>
        <dbReference type="ChEBI" id="CHEBI:29105"/>
    </cofactor>
    <text evidence="1">Binds 1 zinc ion per subunit.</text>
</comment>
<comment type="activity regulation">
    <text evidence="6">Inhibited by EDTA or 1,10-phenanthroline. Not inhibited by PMSF.</text>
</comment>
<comment type="subunit">
    <text evidence="6">Heterodimer; disulfide-linked.</text>
</comment>
<comment type="subcellular location">
    <subcellularLocation>
        <location evidence="1">Secreted</location>
    </subcellularLocation>
</comment>
<comment type="tissue specificity">
    <text>Expressed by the venom gland.</text>
</comment>
<comment type="PTM">
    <text evidence="6">The N-terminus is blocked.</text>
</comment>
<comment type="similarity">
    <text evidence="7">Belongs to the venom metalloproteinase (M12B) family. P-III subfamily. P-IIIc sub-subfamily.</text>
</comment>
<dbReference type="EC" id="3.4.24.-"/>
<dbReference type="EMBL" id="AY835997">
    <property type="protein sequence ID" value="AAX38182.1"/>
    <property type="molecule type" value="mRNA"/>
</dbReference>
<dbReference type="SMR" id="Q4VM07"/>
<dbReference type="MEROPS" id="M12.315"/>
<dbReference type="GO" id="GO:0005576">
    <property type="term" value="C:extracellular region"/>
    <property type="evidence" value="ECO:0007669"/>
    <property type="project" value="UniProtKB-SubCell"/>
</dbReference>
<dbReference type="GO" id="GO:0005886">
    <property type="term" value="C:plasma membrane"/>
    <property type="evidence" value="ECO:0007669"/>
    <property type="project" value="TreeGrafter"/>
</dbReference>
<dbReference type="GO" id="GO:0046872">
    <property type="term" value="F:metal ion binding"/>
    <property type="evidence" value="ECO:0007669"/>
    <property type="project" value="UniProtKB-KW"/>
</dbReference>
<dbReference type="GO" id="GO:0004222">
    <property type="term" value="F:metalloendopeptidase activity"/>
    <property type="evidence" value="ECO:0007669"/>
    <property type="project" value="InterPro"/>
</dbReference>
<dbReference type="GO" id="GO:0090729">
    <property type="term" value="F:toxin activity"/>
    <property type="evidence" value="ECO:0007669"/>
    <property type="project" value="UniProtKB-KW"/>
</dbReference>
<dbReference type="GO" id="GO:0006915">
    <property type="term" value="P:apoptotic process"/>
    <property type="evidence" value="ECO:0007669"/>
    <property type="project" value="UniProtKB-KW"/>
</dbReference>
<dbReference type="GO" id="GO:0006508">
    <property type="term" value="P:proteolysis"/>
    <property type="evidence" value="ECO:0007669"/>
    <property type="project" value="UniProtKB-KW"/>
</dbReference>
<dbReference type="CDD" id="cd04269">
    <property type="entry name" value="ZnMc_adamalysin_II_like"/>
    <property type="match status" value="1"/>
</dbReference>
<dbReference type="FunFam" id="3.40.390.10:FF:000002">
    <property type="entry name" value="Disintegrin and metalloproteinase domain-containing protein 22"/>
    <property type="match status" value="1"/>
</dbReference>
<dbReference type="FunFam" id="4.10.70.10:FF:000001">
    <property type="entry name" value="Disintegrin and metalloproteinase domain-containing protein 22"/>
    <property type="match status" value="1"/>
</dbReference>
<dbReference type="Gene3D" id="3.40.390.10">
    <property type="entry name" value="Collagenase (Catalytic Domain)"/>
    <property type="match status" value="1"/>
</dbReference>
<dbReference type="Gene3D" id="4.10.70.10">
    <property type="entry name" value="Disintegrin domain"/>
    <property type="match status" value="1"/>
</dbReference>
<dbReference type="InterPro" id="IPR006586">
    <property type="entry name" value="ADAM_Cys-rich"/>
</dbReference>
<dbReference type="InterPro" id="IPR018358">
    <property type="entry name" value="Disintegrin_CS"/>
</dbReference>
<dbReference type="InterPro" id="IPR001762">
    <property type="entry name" value="Disintegrin_dom"/>
</dbReference>
<dbReference type="InterPro" id="IPR036436">
    <property type="entry name" value="Disintegrin_dom_sf"/>
</dbReference>
<dbReference type="InterPro" id="IPR024079">
    <property type="entry name" value="MetalloPept_cat_dom_sf"/>
</dbReference>
<dbReference type="InterPro" id="IPR001590">
    <property type="entry name" value="Peptidase_M12B"/>
</dbReference>
<dbReference type="InterPro" id="IPR002870">
    <property type="entry name" value="Peptidase_M12B_N"/>
</dbReference>
<dbReference type="InterPro" id="IPR034027">
    <property type="entry name" value="Reprolysin_adamalysin"/>
</dbReference>
<dbReference type="PANTHER" id="PTHR11905">
    <property type="entry name" value="ADAM A DISINTEGRIN AND METALLOPROTEASE DOMAIN"/>
    <property type="match status" value="1"/>
</dbReference>
<dbReference type="PANTHER" id="PTHR11905:SF32">
    <property type="entry name" value="DISINTEGRIN AND METALLOPROTEINASE DOMAIN-CONTAINING PROTEIN 28"/>
    <property type="match status" value="1"/>
</dbReference>
<dbReference type="Pfam" id="PF08516">
    <property type="entry name" value="ADAM_CR"/>
    <property type="match status" value="1"/>
</dbReference>
<dbReference type="Pfam" id="PF00200">
    <property type="entry name" value="Disintegrin"/>
    <property type="match status" value="1"/>
</dbReference>
<dbReference type="Pfam" id="PF01562">
    <property type="entry name" value="Pep_M12B_propep"/>
    <property type="match status" value="1"/>
</dbReference>
<dbReference type="Pfam" id="PF01421">
    <property type="entry name" value="Reprolysin"/>
    <property type="match status" value="1"/>
</dbReference>
<dbReference type="PRINTS" id="PR00289">
    <property type="entry name" value="DISINTEGRIN"/>
</dbReference>
<dbReference type="SMART" id="SM00608">
    <property type="entry name" value="ACR"/>
    <property type="match status" value="1"/>
</dbReference>
<dbReference type="SMART" id="SM00050">
    <property type="entry name" value="DISIN"/>
    <property type="match status" value="1"/>
</dbReference>
<dbReference type="SUPFAM" id="SSF57552">
    <property type="entry name" value="Blood coagulation inhibitor (disintegrin)"/>
    <property type="match status" value="1"/>
</dbReference>
<dbReference type="SUPFAM" id="SSF55486">
    <property type="entry name" value="Metalloproteases ('zincins'), catalytic domain"/>
    <property type="match status" value="1"/>
</dbReference>
<dbReference type="PROSITE" id="PS50215">
    <property type="entry name" value="ADAM_MEPRO"/>
    <property type="match status" value="1"/>
</dbReference>
<dbReference type="PROSITE" id="PS00427">
    <property type="entry name" value="DISINTEGRIN_1"/>
    <property type="match status" value="1"/>
</dbReference>
<dbReference type="PROSITE" id="PS50214">
    <property type="entry name" value="DISINTEGRIN_2"/>
    <property type="match status" value="1"/>
</dbReference>
<dbReference type="PROSITE" id="PS00142">
    <property type="entry name" value="ZINC_PROTEASE"/>
    <property type="match status" value="1"/>
</dbReference>
<keyword id="KW-0053">Apoptosis</keyword>
<keyword id="KW-0106">Calcium</keyword>
<keyword id="KW-1217">Cell adhesion impairing toxin</keyword>
<keyword id="KW-0903">Direct protein sequencing</keyword>
<keyword id="KW-1015">Disulfide bond</keyword>
<keyword id="KW-1206">Fibrinogenolytic toxin</keyword>
<keyword id="KW-0325">Glycoprotein</keyword>
<keyword id="KW-1199">Hemostasis impairing toxin</keyword>
<keyword id="KW-0378">Hydrolase</keyword>
<keyword id="KW-0479">Metal-binding</keyword>
<keyword id="KW-0482">Metalloprotease</keyword>
<keyword id="KW-0645">Protease</keyword>
<keyword id="KW-0873">Pyrrolidone carboxylic acid</keyword>
<keyword id="KW-0964">Secreted</keyword>
<keyword id="KW-0732">Signal</keyword>
<keyword id="KW-0800">Toxin</keyword>
<keyword id="KW-0862">Zinc</keyword>
<keyword id="KW-0865">Zymogen</keyword>
<protein>
    <recommendedName>
        <fullName>Zinc metalloproteinase-disintegrin-like VLAIP-B</fullName>
        <ecNumber>3.4.24.-</ecNumber>
    </recommendedName>
    <alternativeName>
        <fullName>Snake venom metalloproteinase</fullName>
        <shortName>SVMP</shortName>
    </alternativeName>
</protein>
<reference key="1">
    <citation type="journal article" date="2005" name="Toxicon">
        <title>A novel metalloprotease from Vipera lebetina venom induces human endothelial cell apoptosis.</title>
        <authorList>
            <person name="Trummal K."/>
            <person name="Tonismagi K."/>
            <person name="Siigur E."/>
            <person name="Aaspollu A."/>
            <person name="Lopp A."/>
            <person name="Sillat T."/>
            <person name="Saat R."/>
            <person name="Kasak L."/>
            <person name="Tammiste I."/>
            <person name="Kogerman P."/>
            <person name="Kalkkinen N."/>
            <person name="Siigur J."/>
        </authorList>
    </citation>
    <scope>NUCLEOTIDE SEQUENCE [MRNA]</scope>
    <scope>PROTEIN SEQUENCE OF 229-241; 317-327; 338-348; 359-379; 440-456; 460-491; 501-513; 563-573 AND 588-614</scope>
    <scope>PYROGLUTAMATE FORMATION AT GLN-194</scope>
    <scope>FUNCTION</scope>
    <scope>CATALYTIC ACTIVITY</scope>
    <scope>ACTIVITY REGULATION</scope>
    <scope>SUBUNIT</scope>
    <source>
        <tissue>Venom</tissue>
        <tissue>Venom gland</tissue>
    </source>
</reference>